<comment type="function">
    <text evidence="1">DNA-dependent RNA polymerase catalyzes the transcription of DNA into RNA using the four ribonucleoside triphosphates as substrates.</text>
</comment>
<comment type="catalytic activity">
    <reaction evidence="1">
        <text>RNA(n) + a ribonucleoside 5'-triphosphate = RNA(n+1) + diphosphate</text>
        <dbReference type="Rhea" id="RHEA:21248"/>
        <dbReference type="Rhea" id="RHEA-COMP:14527"/>
        <dbReference type="Rhea" id="RHEA-COMP:17342"/>
        <dbReference type="ChEBI" id="CHEBI:33019"/>
        <dbReference type="ChEBI" id="CHEBI:61557"/>
        <dbReference type="ChEBI" id="CHEBI:140395"/>
        <dbReference type="EC" id="2.7.7.6"/>
    </reaction>
</comment>
<comment type="cofactor">
    <cofactor evidence="1">
        <name>Mg(2+)</name>
        <dbReference type="ChEBI" id="CHEBI:18420"/>
    </cofactor>
    <text evidence="1">Binds 1 Mg(2+) ion per subunit.</text>
</comment>
<comment type="cofactor">
    <cofactor evidence="1">
        <name>Zn(2+)</name>
        <dbReference type="ChEBI" id="CHEBI:29105"/>
    </cofactor>
    <text evidence="1">Binds 2 Zn(2+) ions per subunit.</text>
</comment>
<comment type="subunit">
    <text evidence="1">The RNAP catalytic core consists of 2 alpha, 1 beta, 1 beta' and 1 omega subunit. When a sigma factor is associated with the core the holoenzyme is formed, which can initiate transcription.</text>
</comment>
<comment type="similarity">
    <text evidence="1">Belongs to the RNA polymerase beta' chain family.</text>
</comment>
<protein>
    <recommendedName>
        <fullName evidence="1">DNA-directed RNA polymerase subunit beta'</fullName>
        <shortName evidence="1">RNAP subunit beta'</shortName>
        <ecNumber evidence="1">2.7.7.6</ecNumber>
    </recommendedName>
    <alternativeName>
        <fullName evidence="1">RNA polymerase subunit beta'</fullName>
    </alternativeName>
    <alternativeName>
        <fullName evidence="1">Transcriptase subunit beta'</fullName>
    </alternativeName>
</protein>
<organism>
    <name type="scientific">Pseudomonas fluorescens (strain SBW25)</name>
    <dbReference type="NCBI Taxonomy" id="216595"/>
    <lineage>
        <taxon>Bacteria</taxon>
        <taxon>Pseudomonadati</taxon>
        <taxon>Pseudomonadota</taxon>
        <taxon>Gammaproteobacteria</taxon>
        <taxon>Pseudomonadales</taxon>
        <taxon>Pseudomonadaceae</taxon>
        <taxon>Pseudomonas</taxon>
    </lineage>
</organism>
<evidence type="ECO:0000255" key="1">
    <source>
        <dbReference type="HAMAP-Rule" id="MF_01322"/>
    </source>
</evidence>
<name>RPOC_PSEFS</name>
<proteinExistence type="inferred from homology"/>
<dbReference type="EC" id="2.7.7.6" evidence="1"/>
<dbReference type="EMBL" id="AM181176">
    <property type="protein sequence ID" value="CAY52776.1"/>
    <property type="molecule type" value="Genomic_DNA"/>
</dbReference>
<dbReference type="RefSeq" id="WP_015886137.1">
    <property type="nucleotide sequence ID" value="NC_012660.1"/>
</dbReference>
<dbReference type="SMR" id="C3K2Y2"/>
<dbReference type="STRING" id="294.SRM1_05185"/>
<dbReference type="GeneID" id="93467155"/>
<dbReference type="eggNOG" id="COG0086">
    <property type="taxonomic scope" value="Bacteria"/>
</dbReference>
<dbReference type="HOGENOM" id="CLU_000524_3_1_6"/>
<dbReference type="OrthoDB" id="9815296at2"/>
<dbReference type="GO" id="GO:0000428">
    <property type="term" value="C:DNA-directed RNA polymerase complex"/>
    <property type="evidence" value="ECO:0007669"/>
    <property type="project" value="UniProtKB-KW"/>
</dbReference>
<dbReference type="GO" id="GO:0003677">
    <property type="term" value="F:DNA binding"/>
    <property type="evidence" value="ECO:0007669"/>
    <property type="project" value="UniProtKB-UniRule"/>
</dbReference>
<dbReference type="GO" id="GO:0003899">
    <property type="term" value="F:DNA-directed RNA polymerase activity"/>
    <property type="evidence" value="ECO:0007669"/>
    <property type="project" value="UniProtKB-UniRule"/>
</dbReference>
<dbReference type="GO" id="GO:0000287">
    <property type="term" value="F:magnesium ion binding"/>
    <property type="evidence" value="ECO:0007669"/>
    <property type="project" value="UniProtKB-UniRule"/>
</dbReference>
<dbReference type="GO" id="GO:0008270">
    <property type="term" value="F:zinc ion binding"/>
    <property type="evidence" value="ECO:0007669"/>
    <property type="project" value="UniProtKB-UniRule"/>
</dbReference>
<dbReference type="GO" id="GO:0006351">
    <property type="term" value="P:DNA-templated transcription"/>
    <property type="evidence" value="ECO:0007669"/>
    <property type="project" value="UniProtKB-UniRule"/>
</dbReference>
<dbReference type="CDD" id="cd02655">
    <property type="entry name" value="RNAP_beta'_C"/>
    <property type="match status" value="1"/>
</dbReference>
<dbReference type="CDD" id="cd01609">
    <property type="entry name" value="RNAP_beta'_N"/>
    <property type="match status" value="1"/>
</dbReference>
<dbReference type="FunFam" id="1.10.132.30:FF:000003">
    <property type="entry name" value="DNA-directed RNA polymerase subunit beta"/>
    <property type="match status" value="1"/>
</dbReference>
<dbReference type="FunFam" id="1.10.150.390:FF:000002">
    <property type="entry name" value="DNA-directed RNA polymerase subunit beta"/>
    <property type="match status" value="1"/>
</dbReference>
<dbReference type="FunFam" id="1.10.40.90:FF:000001">
    <property type="entry name" value="DNA-directed RNA polymerase subunit beta"/>
    <property type="match status" value="1"/>
</dbReference>
<dbReference type="FunFam" id="4.10.860.120:FF:000001">
    <property type="entry name" value="DNA-directed RNA polymerase subunit beta"/>
    <property type="match status" value="1"/>
</dbReference>
<dbReference type="Gene3D" id="1.10.132.30">
    <property type="match status" value="1"/>
</dbReference>
<dbReference type="Gene3D" id="1.10.150.390">
    <property type="match status" value="1"/>
</dbReference>
<dbReference type="Gene3D" id="1.10.1790.20">
    <property type="match status" value="1"/>
</dbReference>
<dbReference type="Gene3D" id="1.10.40.90">
    <property type="match status" value="1"/>
</dbReference>
<dbReference type="Gene3D" id="2.40.40.20">
    <property type="match status" value="1"/>
</dbReference>
<dbReference type="Gene3D" id="2.40.50.100">
    <property type="match status" value="3"/>
</dbReference>
<dbReference type="Gene3D" id="4.10.860.120">
    <property type="entry name" value="RNA polymerase II, clamp domain"/>
    <property type="match status" value="1"/>
</dbReference>
<dbReference type="Gene3D" id="1.10.274.100">
    <property type="entry name" value="RNA polymerase Rpb1, domain 3"/>
    <property type="match status" value="2"/>
</dbReference>
<dbReference type="HAMAP" id="MF_01322">
    <property type="entry name" value="RNApol_bact_RpoC"/>
    <property type="match status" value="1"/>
</dbReference>
<dbReference type="InterPro" id="IPR045867">
    <property type="entry name" value="DNA-dir_RpoC_beta_prime"/>
</dbReference>
<dbReference type="InterPro" id="IPR012754">
    <property type="entry name" value="DNA-dir_RpoC_beta_prime_bact"/>
</dbReference>
<dbReference type="InterPro" id="IPR000722">
    <property type="entry name" value="RNA_pol_asu"/>
</dbReference>
<dbReference type="InterPro" id="IPR006592">
    <property type="entry name" value="RNA_pol_N"/>
</dbReference>
<dbReference type="InterPro" id="IPR007080">
    <property type="entry name" value="RNA_pol_Rpb1_1"/>
</dbReference>
<dbReference type="InterPro" id="IPR007066">
    <property type="entry name" value="RNA_pol_Rpb1_3"/>
</dbReference>
<dbReference type="InterPro" id="IPR042102">
    <property type="entry name" value="RNA_pol_Rpb1_3_sf"/>
</dbReference>
<dbReference type="InterPro" id="IPR007083">
    <property type="entry name" value="RNA_pol_Rpb1_4"/>
</dbReference>
<dbReference type="InterPro" id="IPR007081">
    <property type="entry name" value="RNA_pol_Rpb1_5"/>
</dbReference>
<dbReference type="InterPro" id="IPR044893">
    <property type="entry name" value="RNA_pol_Rpb1_clamp_domain"/>
</dbReference>
<dbReference type="InterPro" id="IPR038120">
    <property type="entry name" value="Rpb1_funnel_sf"/>
</dbReference>
<dbReference type="NCBIfam" id="TIGR02386">
    <property type="entry name" value="rpoC_TIGR"/>
    <property type="match status" value="1"/>
</dbReference>
<dbReference type="PANTHER" id="PTHR19376">
    <property type="entry name" value="DNA-DIRECTED RNA POLYMERASE"/>
    <property type="match status" value="1"/>
</dbReference>
<dbReference type="PANTHER" id="PTHR19376:SF54">
    <property type="entry name" value="DNA-DIRECTED RNA POLYMERASE SUBUNIT BETA"/>
    <property type="match status" value="1"/>
</dbReference>
<dbReference type="Pfam" id="PF04997">
    <property type="entry name" value="RNA_pol_Rpb1_1"/>
    <property type="match status" value="1"/>
</dbReference>
<dbReference type="Pfam" id="PF00623">
    <property type="entry name" value="RNA_pol_Rpb1_2"/>
    <property type="match status" value="2"/>
</dbReference>
<dbReference type="Pfam" id="PF04983">
    <property type="entry name" value="RNA_pol_Rpb1_3"/>
    <property type="match status" value="1"/>
</dbReference>
<dbReference type="Pfam" id="PF05000">
    <property type="entry name" value="RNA_pol_Rpb1_4"/>
    <property type="match status" value="1"/>
</dbReference>
<dbReference type="Pfam" id="PF04998">
    <property type="entry name" value="RNA_pol_Rpb1_5"/>
    <property type="match status" value="1"/>
</dbReference>
<dbReference type="SMART" id="SM00663">
    <property type="entry name" value="RPOLA_N"/>
    <property type="match status" value="1"/>
</dbReference>
<dbReference type="SUPFAM" id="SSF64484">
    <property type="entry name" value="beta and beta-prime subunits of DNA dependent RNA-polymerase"/>
    <property type="match status" value="1"/>
</dbReference>
<gene>
    <name evidence="1" type="primary">rpoC</name>
    <name type="ordered locus">PFLU_5533</name>
</gene>
<accession>C3K2Y2</accession>
<keyword id="KW-0240">DNA-directed RNA polymerase</keyword>
<keyword id="KW-0460">Magnesium</keyword>
<keyword id="KW-0479">Metal-binding</keyword>
<keyword id="KW-0548">Nucleotidyltransferase</keyword>
<keyword id="KW-0804">Transcription</keyword>
<keyword id="KW-0808">Transferase</keyword>
<keyword id="KW-0862">Zinc</keyword>
<sequence length="1399" mass="154625">MKDLLNLLKNQGQVEEFDAIRIGLASPEMIRSWSFGEVKKPETINYRTFKPERDGLFCAKIFGPVKDYECLCGKYKRLKHRGVICEKCGVEVALAKVRRERMAHIELASPVAHIWFLKSLPSRIGLLMDMTLRDIERVLYFESYVVIDPGMTTLEKGQLLNDEQYFEALEEFGDDFDARMGAEAVRELLHAIDLEHEIGRLREEIPQTNSETKIKKLSKRLKLMEAFQGSGNLPEWMVLTVLPVLPPDLRPLVPLDGGRFATSDLNDLYRRVINRNNRLKRLLDLSAPDIIVRNEKRMLQEAVDALLDNGRRGRAITGSNKRPLKSLADMIKGKQGRFRQNLLGKRVDYSGRSVITVGPTLRLHQCGLPKKMALELFKPFIFGKLEMRGLATTIKAAKKMVERELPEVWDVLAEVIREHPVLLNRAPTLHRLGIQAFEPVLIEGKAIQLHPLVCAAYNADFDGDQMAVHVPLTLEAQLEARALMMSTNNILSPANGEPIIVPSQDVVLGLYYMTREAINAKGEGRVFADLQEVDRVFRAGEAALHAKVKVRINETVNDRDGGSVTNTRIVDTTVGRALLYQVVPKGLSYDVVNLPMKKKAISKLINQCYRVVGLKETVIFADQLMYTGFAYSTISGVSIGVNDFVIPDEKAQIIGAATDEVKEIESQYASGLVTQGEKYNKVIDLWSKANDEVSKAMMANLSKEKVIDRHGVEVDQESFNSMYMMADSGARGSAAQIRQLAGMRGLMAKPDGSIIETPITANFREGLSVLQYFISTHGARKGLADTALKTANSGYLTRRLVDVAQDLVVTEVDCGTEHGLLMTPHIEGGDVVEPLGERVLGRVIARDVFKPGTEEIIVPAGTLVDEKWVEFIELNSIDEVIVRSPISCETRYGICAKCYGRDLARGHQVNIGEAVGVIAAQSIGEPGTQLTMRTFHIGGAASRTSAADSVQVKNGGTVRLHNLKHVERVDGHLVAVSRSGELAIADDYGRERERYKLPYGAVISVKEGDKVDAGAIVAKWDPHTHPIVTEMKGTVTYVGMEEGITIKRQTDELTGMTNIEVLDAKDRPAAGKDIRPAVKMVDDNGKDLLLPGTDVIAQYFLPANALVGVADGAKIAIGDVIARIPQETSKTRDITGGLPRVADLFEARRPKEASILAEVSGTIAFGKETKGKRRLVITPNDGSDPYEELIPKWRHLNVFEGEQVNRGEVISDGPSDPHDILRLLGVSALAKYIVNEIQDVYRLQGVKINDKHIETILRQMLRKVEIAESGDSSFIKGDQMELTHVLVENERLGAEDKFVSKFTRVLLGITKASLSTESFISAASFQETTRVLTEAAVTGKRDYLRGLKENVVVGRLIPAGTGLAYHSERKRRRDADKPLRVSASEVEAALTEALNSSGN</sequence>
<feature type="chain" id="PRO_1000214496" description="DNA-directed RNA polymerase subunit beta'">
    <location>
        <begin position="1"/>
        <end position="1399"/>
    </location>
</feature>
<feature type="binding site" evidence="1">
    <location>
        <position position="70"/>
    </location>
    <ligand>
        <name>Zn(2+)</name>
        <dbReference type="ChEBI" id="CHEBI:29105"/>
        <label>1</label>
    </ligand>
</feature>
<feature type="binding site" evidence="1">
    <location>
        <position position="72"/>
    </location>
    <ligand>
        <name>Zn(2+)</name>
        <dbReference type="ChEBI" id="CHEBI:29105"/>
        <label>1</label>
    </ligand>
</feature>
<feature type="binding site" evidence="1">
    <location>
        <position position="85"/>
    </location>
    <ligand>
        <name>Zn(2+)</name>
        <dbReference type="ChEBI" id="CHEBI:29105"/>
        <label>1</label>
    </ligand>
</feature>
<feature type="binding site" evidence="1">
    <location>
        <position position="88"/>
    </location>
    <ligand>
        <name>Zn(2+)</name>
        <dbReference type="ChEBI" id="CHEBI:29105"/>
        <label>1</label>
    </ligand>
</feature>
<feature type="binding site" evidence="1">
    <location>
        <position position="460"/>
    </location>
    <ligand>
        <name>Mg(2+)</name>
        <dbReference type="ChEBI" id="CHEBI:18420"/>
    </ligand>
</feature>
<feature type="binding site" evidence="1">
    <location>
        <position position="462"/>
    </location>
    <ligand>
        <name>Mg(2+)</name>
        <dbReference type="ChEBI" id="CHEBI:18420"/>
    </ligand>
</feature>
<feature type="binding site" evidence="1">
    <location>
        <position position="464"/>
    </location>
    <ligand>
        <name>Mg(2+)</name>
        <dbReference type="ChEBI" id="CHEBI:18420"/>
    </ligand>
</feature>
<feature type="binding site" evidence="1">
    <location>
        <position position="814"/>
    </location>
    <ligand>
        <name>Zn(2+)</name>
        <dbReference type="ChEBI" id="CHEBI:29105"/>
        <label>2</label>
    </ligand>
</feature>
<feature type="binding site" evidence="1">
    <location>
        <position position="888"/>
    </location>
    <ligand>
        <name>Zn(2+)</name>
        <dbReference type="ChEBI" id="CHEBI:29105"/>
        <label>2</label>
    </ligand>
</feature>
<feature type="binding site" evidence="1">
    <location>
        <position position="895"/>
    </location>
    <ligand>
        <name>Zn(2+)</name>
        <dbReference type="ChEBI" id="CHEBI:29105"/>
        <label>2</label>
    </ligand>
</feature>
<feature type="binding site" evidence="1">
    <location>
        <position position="898"/>
    </location>
    <ligand>
        <name>Zn(2+)</name>
        <dbReference type="ChEBI" id="CHEBI:29105"/>
        <label>2</label>
    </ligand>
</feature>
<reference key="1">
    <citation type="journal article" date="2009" name="Genome Biol.">
        <title>Genomic and genetic analyses of diversity and plant interactions of Pseudomonas fluorescens.</title>
        <authorList>
            <person name="Silby M.W."/>
            <person name="Cerdeno-Tarraga A.M."/>
            <person name="Vernikos G.S."/>
            <person name="Giddens S.R."/>
            <person name="Jackson R.W."/>
            <person name="Preston G.M."/>
            <person name="Zhang X.-X."/>
            <person name="Moon C.D."/>
            <person name="Gehrig S.M."/>
            <person name="Godfrey S.A.C."/>
            <person name="Knight C.G."/>
            <person name="Malone J.G."/>
            <person name="Robinson Z."/>
            <person name="Spiers A.J."/>
            <person name="Harris S."/>
            <person name="Challis G.L."/>
            <person name="Yaxley A.M."/>
            <person name="Harris D."/>
            <person name="Seeger K."/>
            <person name="Murphy L."/>
            <person name="Rutter S."/>
            <person name="Squares R."/>
            <person name="Quail M.A."/>
            <person name="Saunders E."/>
            <person name="Mavromatis K."/>
            <person name="Brettin T.S."/>
            <person name="Bentley S.D."/>
            <person name="Hothersall J."/>
            <person name="Stephens E."/>
            <person name="Thomas C.M."/>
            <person name="Parkhill J."/>
            <person name="Levy S.B."/>
            <person name="Rainey P.B."/>
            <person name="Thomson N.R."/>
        </authorList>
    </citation>
    <scope>NUCLEOTIDE SEQUENCE [LARGE SCALE GENOMIC DNA]</scope>
    <source>
        <strain>SBW25</strain>
    </source>
</reference>